<proteinExistence type="inferred from homology"/>
<name>CX5C2_HELAN</name>
<gene>
    <name type="primary">COX5C2</name>
</gene>
<reference key="1">
    <citation type="submission" date="2002-01" db="EMBL/GenBank/DDBJ databases">
        <title>Genes encoding cytochrome c oxidase subunit 5c from sunflower (Helianthus annuus L.): cDNA isolation and expression studies.</title>
        <authorList>
            <person name="Curi G.C."/>
            <person name="Chan R.L."/>
            <person name="Gonzalez D.H."/>
        </authorList>
    </citation>
    <scope>NUCLEOTIDE SEQUENCE [MRNA]</scope>
</reference>
<keyword id="KW-0472">Membrane</keyword>
<keyword id="KW-0496">Mitochondrion</keyword>
<keyword id="KW-0999">Mitochondrion inner membrane</keyword>
<keyword id="KW-0812">Transmembrane</keyword>
<keyword id="KW-1133">Transmembrane helix</keyword>
<protein>
    <recommendedName>
        <fullName>Cytochrome c oxidase subunit 5C-2</fullName>
    </recommendedName>
    <alternativeName>
        <fullName>Cytochrome c oxidase polypeptide Vc-2</fullName>
    </alternativeName>
</protein>
<feature type="chain" id="PRO_0000128190" description="Cytochrome c oxidase subunit 5C-2">
    <location>
        <begin position="1"/>
        <end position="64"/>
    </location>
</feature>
<feature type="transmembrane region" description="Helical" evidence="2">
    <location>
        <begin position="15"/>
        <end position="34"/>
    </location>
</feature>
<evidence type="ECO:0000250" key="1"/>
<evidence type="ECO:0000255" key="2"/>
<evidence type="ECO:0000305" key="3"/>
<organism>
    <name type="scientific">Helianthus annuus</name>
    <name type="common">Common sunflower</name>
    <dbReference type="NCBI Taxonomy" id="4232"/>
    <lineage>
        <taxon>Eukaryota</taxon>
        <taxon>Viridiplantae</taxon>
        <taxon>Streptophyta</taxon>
        <taxon>Embryophyta</taxon>
        <taxon>Tracheophyta</taxon>
        <taxon>Spermatophyta</taxon>
        <taxon>Magnoliopsida</taxon>
        <taxon>eudicotyledons</taxon>
        <taxon>Gunneridae</taxon>
        <taxon>Pentapetalae</taxon>
        <taxon>asterids</taxon>
        <taxon>campanulids</taxon>
        <taxon>Asterales</taxon>
        <taxon>Asteraceae</taxon>
        <taxon>Asteroideae</taxon>
        <taxon>Heliantheae alliance</taxon>
        <taxon>Heliantheae</taxon>
        <taxon>Helianthus</taxon>
    </lineage>
</organism>
<accession>Q8VY39</accession>
<dbReference type="EMBL" id="AY072781">
    <property type="protein sequence ID" value="AAL67939.1"/>
    <property type="molecule type" value="mRNA"/>
</dbReference>
<dbReference type="SMR" id="Q8VY39"/>
<dbReference type="GO" id="GO:0005743">
    <property type="term" value="C:mitochondrial inner membrane"/>
    <property type="evidence" value="ECO:0007669"/>
    <property type="project" value="UniProtKB-SubCell"/>
</dbReference>
<dbReference type="InterPro" id="IPR008432">
    <property type="entry name" value="COX5C"/>
</dbReference>
<dbReference type="PANTHER" id="PTHR34372">
    <property type="entry name" value="CYTOCHROME C OXIDASE SUBUNIT 5C-2-RELATED"/>
    <property type="match status" value="1"/>
</dbReference>
<dbReference type="PANTHER" id="PTHR34372:SF2">
    <property type="entry name" value="CYTOCHROME C OXIDASE SUBUNIT 5C-2-RELATED"/>
    <property type="match status" value="1"/>
</dbReference>
<dbReference type="PIRSF" id="PIRSF038131">
    <property type="entry name" value="COX5C"/>
    <property type="match status" value="1"/>
</dbReference>
<sequence length="64" mass="7010">MGGGRVAHPVLKGPSVVKELVIGTVLGLAAGGLWKMHHWNEQRKTRAFYDLLEKGEISVVVDEE</sequence>
<comment type="function">
    <text evidence="1">This protein is one of the nuclear-coded polypeptide chains of cytochrome c oxidase, the terminal oxidase in mitochondrial electron transport.</text>
</comment>
<comment type="subcellular location">
    <subcellularLocation>
        <location evidence="1">Mitochondrion inner membrane</location>
    </subcellularLocation>
</comment>
<comment type="similarity">
    <text evidence="3">Belongs to the cytochrome c oxidase subunit 5C family.</text>
</comment>